<proteinExistence type="evidence at protein level"/>
<accession>Q8IUY3</accession>
<accession>B3KT68</accession>
<comment type="function">
    <text evidence="3">Participates in the organization of endoplasmic reticulum-plasma membrane contact sites (EPCS) with pleiotropic functions including STIM1 recruitment and calcium homeostasis. Constitutive tether that co-localize with ESYT2/3 tethers at endoplasmic reticulum-plasma membrane contact sites in a phosphatidylinositol lipid-dependent manner. Pre-marks the subset of phosphtidylinositol 4,5-biphosphate (PI(4,5)P2)-enriched EPCS destined for the store operated calcium entry pathway (SOCE).</text>
</comment>
<comment type="interaction">
    <interactant intactId="EBI-11984319">
        <id>Q8IUY3</id>
    </interactant>
    <interactant intactId="EBI-752094">
        <id>Q12982</id>
        <label>BNIP2</label>
    </interactant>
    <organismsDiffer>false</organismsDiffer>
    <experiments>3</experiments>
</comment>
<comment type="interaction">
    <interactant intactId="EBI-11984319">
        <id>Q8IUY3</id>
    </interactant>
    <interactant intactId="EBI-489887">
        <id>P50402</id>
        <label>EMD</label>
    </interactant>
    <organismsDiffer>false</organismsDiffer>
    <experiments>3</experiments>
</comment>
<comment type="interaction">
    <interactant intactId="EBI-11984319">
        <id>Q8IUY3</id>
    </interactant>
    <interactant intactId="EBI-765817">
        <id>Q9Y228</id>
        <label>TRAF3IP3</label>
    </interactant>
    <organismsDiffer>false</organismsDiffer>
    <experiments>3</experiments>
</comment>
<comment type="subcellular location">
    <subcellularLocation>
        <location evidence="3">Endoplasmic reticulum membrane</location>
        <topology evidence="4">Single-pass membrane protein</topology>
    </subcellularLocation>
    <subcellularLocation>
        <location evidence="3">Cell membrane</location>
        <topology evidence="3">Peripheral membrane protein</topology>
    </subcellularLocation>
    <text evidence="3">Localizes to endoplasmic reticulum-plasma membrane contact sites (EPCS). Anchored at the ER, PM binding is mediated via GRAM domain and phosphatidylinositol lipid interaction. Localizes to distinct EPCS than GRAMD1A.</text>
</comment>
<comment type="domain">
    <text evidence="3">GRAM domain is required for specific location to endoplasmic reticulum-plasma membrane contact sites (EPCS). Mediates interaction to phosphatidylinositol lipids and binding to plasma membrane.</text>
</comment>
<sequence>MTALSRSEATEEGGNQQMHRKTASLNSPVSCKEKPDRVEEPPDYSLHWPEGLKGEEIKKCGREGITLNKYNQQYHKLFKDVPLEEVVLKVCSCALQRDFLLQGRLYISPNWLCFHASLFGKDIKVVIPVVSVQMIKKHKMARLLPNGLAITTNTSQKYIFVSLLSRDSVYDLLRRVCTHLQPSSKKSLSVREFSGEPESLEVLIPEMKWRKVCPSSRSLSLPDNIPCIPPSSVDSTDSFFPSRKPPMSEKSRAQVASENGGRWAWPMPGWGPACPKKMPNCSPTAKNAVYEEDELEEEPRSTGELRLWDYRLLKVFFVLICFLVMSSSYLAFRISRLEQQLCSLSWDDPVPGHR</sequence>
<name>GRM2A_HUMAN</name>
<gene>
    <name evidence="5" type="primary">GRAMD2A</name>
    <name type="synonym">GRAMD2</name>
</gene>
<organism>
    <name type="scientific">Homo sapiens</name>
    <name type="common">Human</name>
    <dbReference type="NCBI Taxonomy" id="9606"/>
    <lineage>
        <taxon>Eukaryota</taxon>
        <taxon>Metazoa</taxon>
        <taxon>Chordata</taxon>
        <taxon>Craniata</taxon>
        <taxon>Vertebrata</taxon>
        <taxon>Euteleostomi</taxon>
        <taxon>Mammalia</taxon>
        <taxon>Eutheria</taxon>
        <taxon>Euarchontoglires</taxon>
        <taxon>Primates</taxon>
        <taxon>Haplorrhini</taxon>
        <taxon>Catarrhini</taxon>
        <taxon>Hominidae</taxon>
        <taxon>Homo</taxon>
    </lineage>
</organism>
<evidence type="ECO:0000255" key="1"/>
<evidence type="ECO:0000256" key="2">
    <source>
        <dbReference type="SAM" id="MobiDB-lite"/>
    </source>
</evidence>
<evidence type="ECO:0000269" key="3">
    <source>
    </source>
</evidence>
<evidence type="ECO:0000305" key="4"/>
<evidence type="ECO:0000312" key="5">
    <source>
        <dbReference type="HGNC" id="HGNC:27287"/>
    </source>
</evidence>
<reference key="1">
    <citation type="journal article" date="2004" name="Nat. Genet.">
        <title>Complete sequencing and characterization of 21,243 full-length human cDNAs.</title>
        <authorList>
            <person name="Ota T."/>
            <person name="Suzuki Y."/>
            <person name="Nishikawa T."/>
            <person name="Otsuki T."/>
            <person name="Sugiyama T."/>
            <person name="Irie R."/>
            <person name="Wakamatsu A."/>
            <person name="Hayashi K."/>
            <person name="Sato H."/>
            <person name="Nagai K."/>
            <person name="Kimura K."/>
            <person name="Makita H."/>
            <person name="Sekine M."/>
            <person name="Obayashi M."/>
            <person name="Nishi T."/>
            <person name="Shibahara T."/>
            <person name="Tanaka T."/>
            <person name="Ishii S."/>
            <person name="Yamamoto J."/>
            <person name="Saito K."/>
            <person name="Kawai Y."/>
            <person name="Isono Y."/>
            <person name="Nakamura Y."/>
            <person name="Nagahari K."/>
            <person name="Murakami K."/>
            <person name="Yasuda T."/>
            <person name="Iwayanagi T."/>
            <person name="Wagatsuma M."/>
            <person name="Shiratori A."/>
            <person name="Sudo H."/>
            <person name="Hosoiri T."/>
            <person name="Kaku Y."/>
            <person name="Kodaira H."/>
            <person name="Kondo H."/>
            <person name="Sugawara M."/>
            <person name="Takahashi M."/>
            <person name="Kanda K."/>
            <person name="Yokoi T."/>
            <person name="Furuya T."/>
            <person name="Kikkawa E."/>
            <person name="Omura Y."/>
            <person name="Abe K."/>
            <person name="Kamihara K."/>
            <person name="Katsuta N."/>
            <person name="Sato K."/>
            <person name="Tanikawa M."/>
            <person name="Yamazaki M."/>
            <person name="Ninomiya K."/>
            <person name="Ishibashi T."/>
            <person name="Yamashita H."/>
            <person name="Murakawa K."/>
            <person name="Fujimori K."/>
            <person name="Tanai H."/>
            <person name="Kimata M."/>
            <person name="Watanabe M."/>
            <person name="Hiraoka S."/>
            <person name="Chiba Y."/>
            <person name="Ishida S."/>
            <person name="Ono Y."/>
            <person name="Takiguchi S."/>
            <person name="Watanabe S."/>
            <person name="Yosida M."/>
            <person name="Hotuta T."/>
            <person name="Kusano J."/>
            <person name="Kanehori K."/>
            <person name="Takahashi-Fujii A."/>
            <person name="Hara H."/>
            <person name="Tanase T.-O."/>
            <person name="Nomura Y."/>
            <person name="Togiya S."/>
            <person name="Komai F."/>
            <person name="Hara R."/>
            <person name="Takeuchi K."/>
            <person name="Arita M."/>
            <person name="Imose N."/>
            <person name="Musashino K."/>
            <person name="Yuuki H."/>
            <person name="Oshima A."/>
            <person name="Sasaki N."/>
            <person name="Aotsuka S."/>
            <person name="Yoshikawa Y."/>
            <person name="Matsunawa H."/>
            <person name="Ichihara T."/>
            <person name="Shiohata N."/>
            <person name="Sano S."/>
            <person name="Moriya S."/>
            <person name="Momiyama H."/>
            <person name="Satoh N."/>
            <person name="Takami S."/>
            <person name="Terashima Y."/>
            <person name="Suzuki O."/>
            <person name="Nakagawa S."/>
            <person name="Senoh A."/>
            <person name="Mizoguchi H."/>
            <person name="Goto Y."/>
            <person name="Shimizu F."/>
            <person name="Wakebe H."/>
            <person name="Hishigaki H."/>
            <person name="Watanabe T."/>
            <person name="Sugiyama A."/>
            <person name="Takemoto M."/>
            <person name="Kawakami B."/>
            <person name="Yamazaki M."/>
            <person name="Watanabe K."/>
            <person name="Kumagai A."/>
            <person name="Itakura S."/>
            <person name="Fukuzumi Y."/>
            <person name="Fujimori Y."/>
            <person name="Komiyama M."/>
            <person name="Tashiro H."/>
            <person name="Tanigami A."/>
            <person name="Fujiwara T."/>
            <person name="Ono T."/>
            <person name="Yamada K."/>
            <person name="Fujii Y."/>
            <person name="Ozaki K."/>
            <person name="Hirao M."/>
            <person name="Ohmori Y."/>
            <person name="Kawabata A."/>
            <person name="Hikiji T."/>
            <person name="Kobatake N."/>
            <person name="Inagaki H."/>
            <person name="Ikema Y."/>
            <person name="Okamoto S."/>
            <person name="Okitani R."/>
            <person name="Kawakami T."/>
            <person name="Noguchi S."/>
            <person name="Itoh T."/>
            <person name="Shigeta K."/>
            <person name="Senba T."/>
            <person name="Matsumura K."/>
            <person name="Nakajima Y."/>
            <person name="Mizuno T."/>
            <person name="Morinaga M."/>
            <person name="Sasaki M."/>
            <person name="Togashi T."/>
            <person name="Oyama M."/>
            <person name="Hata H."/>
            <person name="Watanabe M."/>
            <person name="Komatsu T."/>
            <person name="Mizushima-Sugano J."/>
            <person name="Satoh T."/>
            <person name="Shirai Y."/>
            <person name="Takahashi Y."/>
            <person name="Nakagawa K."/>
            <person name="Okumura K."/>
            <person name="Nagase T."/>
            <person name="Nomura N."/>
            <person name="Kikuchi H."/>
            <person name="Masuho Y."/>
            <person name="Yamashita R."/>
            <person name="Nakai K."/>
            <person name="Yada T."/>
            <person name="Nakamura Y."/>
            <person name="Ohara O."/>
            <person name="Isogai T."/>
            <person name="Sugano S."/>
        </authorList>
    </citation>
    <scope>NUCLEOTIDE SEQUENCE [LARGE SCALE MRNA]</scope>
    <source>
        <tissue>Hippocampus</tissue>
    </source>
</reference>
<reference key="2">
    <citation type="submission" date="2005-07" db="EMBL/GenBank/DDBJ databases">
        <authorList>
            <person name="Mural R.J."/>
            <person name="Istrail S."/>
            <person name="Sutton G.G."/>
            <person name="Florea L."/>
            <person name="Halpern A.L."/>
            <person name="Mobarry C.M."/>
            <person name="Lippert R."/>
            <person name="Walenz B."/>
            <person name="Shatkay H."/>
            <person name="Dew I."/>
            <person name="Miller J.R."/>
            <person name="Flanigan M.J."/>
            <person name="Edwards N.J."/>
            <person name="Bolanos R."/>
            <person name="Fasulo D."/>
            <person name="Halldorsson B.V."/>
            <person name="Hannenhalli S."/>
            <person name="Turner R."/>
            <person name="Yooseph S."/>
            <person name="Lu F."/>
            <person name="Nusskern D.R."/>
            <person name="Shue B.C."/>
            <person name="Zheng X.H."/>
            <person name="Zhong F."/>
            <person name="Delcher A.L."/>
            <person name="Huson D.H."/>
            <person name="Kravitz S.A."/>
            <person name="Mouchard L."/>
            <person name="Reinert K."/>
            <person name="Remington K.A."/>
            <person name="Clark A.G."/>
            <person name="Waterman M.S."/>
            <person name="Eichler E.E."/>
            <person name="Adams M.D."/>
            <person name="Hunkapiller M.W."/>
            <person name="Myers E.W."/>
            <person name="Venter J.C."/>
        </authorList>
    </citation>
    <scope>NUCLEOTIDE SEQUENCE [LARGE SCALE GENOMIC DNA]</scope>
</reference>
<reference key="3">
    <citation type="journal article" date="2004" name="Genome Res.">
        <title>The status, quality, and expansion of the NIH full-length cDNA project: the Mammalian Gene Collection (MGC).</title>
        <authorList>
            <consortium name="The MGC Project Team"/>
        </authorList>
    </citation>
    <scope>NUCLEOTIDE SEQUENCE [LARGE SCALE MRNA] OF 2-354</scope>
    <source>
        <tissue>Brain</tissue>
    </source>
</reference>
<reference key="4">
    <citation type="journal article" date="2018" name="Elife">
        <title>GRAM domain proteins specialize functionally distinct ER-PM contact sites in human cells.</title>
        <authorList>
            <person name="Besprozvannaya M."/>
            <person name="Dickson E."/>
            <person name="Li H."/>
            <person name="Ginburg K.S."/>
            <person name="Bers D.M."/>
            <person name="Auwerx J."/>
            <person name="Nunnari J."/>
        </authorList>
    </citation>
    <scope>FUNCTION</scope>
    <scope>SUBCELLULAR LOCATION</scope>
    <scope>DOMAIN</scope>
    <scope>LIPID-BINDING</scope>
</reference>
<protein>
    <recommendedName>
        <fullName evidence="4">GRAM domain-containing protein 2A</fullName>
    </recommendedName>
</protein>
<feature type="chain" id="PRO_0000287454" description="GRAM domain-containing protein 2A">
    <location>
        <begin position="1"/>
        <end position="354"/>
    </location>
</feature>
<feature type="transmembrane region" description="Helical" evidence="1">
    <location>
        <begin position="312"/>
        <end position="332"/>
    </location>
</feature>
<feature type="domain" description="GRAM">
    <location>
        <begin position="72"/>
        <end position="139"/>
    </location>
</feature>
<feature type="region of interest" description="Disordered" evidence="2">
    <location>
        <begin position="1"/>
        <end position="46"/>
    </location>
</feature>
<feature type="compositionally biased region" description="Polar residues" evidence="2">
    <location>
        <begin position="1"/>
        <end position="29"/>
    </location>
</feature>
<feature type="compositionally biased region" description="Basic and acidic residues" evidence="2">
    <location>
        <begin position="31"/>
        <end position="40"/>
    </location>
</feature>
<dbReference type="EMBL" id="AK095072">
    <property type="protein sequence ID" value="BAG52980.1"/>
    <property type="molecule type" value="mRNA"/>
</dbReference>
<dbReference type="EMBL" id="DA306775">
    <property type="status" value="NOT_ANNOTATED_CDS"/>
    <property type="molecule type" value="mRNA"/>
</dbReference>
<dbReference type="EMBL" id="CH471082">
    <property type="protein sequence ID" value="EAW77883.1"/>
    <property type="molecule type" value="Genomic_DNA"/>
</dbReference>
<dbReference type="EMBL" id="BC038451">
    <property type="protein sequence ID" value="AAH38451.1"/>
    <property type="molecule type" value="mRNA"/>
</dbReference>
<dbReference type="CCDS" id="CCDS32283.1"/>
<dbReference type="RefSeq" id="NP_001012660.1">
    <property type="nucleotide sequence ID" value="NM_001012642.3"/>
</dbReference>
<dbReference type="SMR" id="Q8IUY3"/>
<dbReference type="BioGRID" id="128234">
    <property type="interactions" value="14"/>
</dbReference>
<dbReference type="FunCoup" id="Q8IUY3">
    <property type="interactions" value="14"/>
</dbReference>
<dbReference type="IntAct" id="Q8IUY3">
    <property type="interactions" value="8"/>
</dbReference>
<dbReference type="STRING" id="9606.ENSP00000311657"/>
<dbReference type="iPTMnet" id="Q8IUY3"/>
<dbReference type="PhosphoSitePlus" id="Q8IUY3"/>
<dbReference type="BioMuta" id="GRAMD2A"/>
<dbReference type="DMDM" id="147644890"/>
<dbReference type="MassIVE" id="Q8IUY3"/>
<dbReference type="PaxDb" id="9606-ENSP00000311657"/>
<dbReference type="PeptideAtlas" id="Q8IUY3"/>
<dbReference type="ProteomicsDB" id="70630"/>
<dbReference type="Antibodypedia" id="26585">
    <property type="antibodies" value="65 antibodies from 18 providers"/>
</dbReference>
<dbReference type="DNASU" id="196996"/>
<dbReference type="Ensembl" id="ENST00000309731.12">
    <property type="protein sequence ID" value="ENSP00000311657.7"/>
    <property type="gene ID" value="ENSG00000175318.12"/>
</dbReference>
<dbReference type="GeneID" id="196996"/>
<dbReference type="KEGG" id="hsa:196996"/>
<dbReference type="MANE-Select" id="ENST00000309731.12">
    <property type="protein sequence ID" value="ENSP00000311657.7"/>
    <property type="RefSeq nucleotide sequence ID" value="NM_001012642.3"/>
    <property type="RefSeq protein sequence ID" value="NP_001012660.1"/>
</dbReference>
<dbReference type="UCSC" id="uc002atq.4">
    <property type="organism name" value="human"/>
</dbReference>
<dbReference type="AGR" id="HGNC:27287"/>
<dbReference type="CTD" id="196996"/>
<dbReference type="DisGeNET" id="196996"/>
<dbReference type="GeneCards" id="GRAMD2A"/>
<dbReference type="HGNC" id="HGNC:27287">
    <property type="gene designation" value="GRAMD2A"/>
</dbReference>
<dbReference type="HPA" id="ENSG00000175318">
    <property type="expression patterns" value="Tissue enhanced (epididymis, placenta)"/>
</dbReference>
<dbReference type="MIM" id="620181">
    <property type="type" value="gene"/>
</dbReference>
<dbReference type="neXtProt" id="NX_Q8IUY3"/>
<dbReference type="OpenTargets" id="ENSG00000175318"/>
<dbReference type="PharmGKB" id="PA142671710"/>
<dbReference type="VEuPathDB" id="HostDB:ENSG00000175318"/>
<dbReference type="eggNOG" id="KOG1032">
    <property type="taxonomic scope" value="Eukaryota"/>
</dbReference>
<dbReference type="GeneTree" id="ENSGT00940000159572"/>
<dbReference type="HOGENOM" id="CLU_050698_0_1_1"/>
<dbReference type="InParanoid" id="Q8IUY3"/>
<dbReference type="OMA" id="CIPRASM"/>
<dbReference type="OrthoDB" id="2162691at2759"/>
<dbReference type="PAN-GO" id="Q8IUY3">
    <property type="GO annotations" value="6 GO annotations based on evolutionary models"/>
</dbReference>
<dbReference type="PhylomeDB" id="Q8IUY3"/>
<dbReference type="TreeFam" id="TF327695"/>
<dbReference type="PathwayCommons" id="Q8IUY3"/>
<dbReference type="SignaLink" id="Q8IUY3"/>
<dbReference type="BioGRID-ORCS" id="196996">
    <property type="hits" value="18 hits in 1143 CRISPR screens"/>
</dbReference>
<dbReference type="ChiTaRS" id="GRAMD2">
    <property type="organism name" value="human"/>
</dbReference>
<dbReference type="GenomeRNAi" id="196996"/>
<dbReference type="Pharos" id="Q8IUY3">
    <property type="development level" value="Tbio"/>
</dbReference>
<dbReference type="PRO" id="PR:Q8IUY3"/>
<dbReference type="Proteomes" id="UP000005640">
    <property type="component" value="Chromosome 15"/>
</dbReference>
<dbReference type="RNAct" id="Q8IUY3">
    <property type="molecule type" value="protein"/>
</dbReference>
<dbReference type="Bgee" id="ENSG00000175318">
    <property type="expression patterns" value="Expressed in oviduct epithelium and 113 other cell types or tissues"/>
</dbReference>
<dbReference type="ExpressionAtlas" id="Q8IUY3">
    <property type="expression patterns" value="baseline and differential"/>
</dbReference>
<dbReference type="GO" id="GO:0005789">
    <property type="term" value="C:endoplasmic reticulum membrane"/>
    <property type="evidence" value="ECO:0000314"/>
    <property type="project" value="UniProtKB"/>
</dbReference>
<dbReference type="GO" id="GO:0044232">
    <property type="term" value="C:organelle membrane contact site"/>
    <property type="evidence" value="ECO:0000314"/>
    <property type="project" value="UniProtKB"/>
</dbReference>
<dbReference type="GO" id="GO:0005886">
    <property type="term" value="C:plasma membrane"/>
    <property type="evidence" value="ECO:0000314"/>
    <property type="project" value="UniProtKB"/>
</dbReference>
<dbReference type="GO" id="GO:0035091">
    <property type="term" value="F:phosphatidylinositol binding"/>
    <property type="evidence" value="ECO:0000314"/>
    <property type="project" value="UniProtKB"/>
</dbReference>
<dbReference type="GO" id="GO:0005546">
    <property type="term" value="F:phosphatidylinositol-4,5-bisphosphate binding"/>
    <property type="evidence" value="ECO:0000314"/>
    <property type="project" value="UniProtKB"/>
</dbReference>
<dbReference type="GO" id="GO:0061817">
    <property type="term" value="P:endoplasmic reticulum-plasma membrane tethering"/>
    <property type="evidence" value="ECO:0000314"/>
    <property type="project" value="UniProtKB"/>
</dbReference>
<dbReference type="GO" id="GO:2001256">
    <property type="term" value="P:regulation of store-operated calcium entry"/>
    <property type="evidence" value="ECO:0000314"/>
    <property type="project" value="UniProtKB"/>
</dbReference>
<dbReference type="CDD" id="cd13220">
    <property type="entry name" value="PH-GRAM_GRAMDC"/>
    <property type="match status" value="1"/>
</dbReference>
<dbReference type="FunFam" id="2.30.29.30:FF:000086">
    <property type="entry name" value="GRAM domain-containing protein 2B isoform 2"/>
    <property type="match status" value="1"/>
</dbReference>
<dbReference type="Gene3D" id="2.30.29.30">
    <property type="entry name" value="Pleckstrin-homology domain (PH domain)/Phosphotyrosine-binding domain (PTB)"/>
    <property type="match status" value="1"/>
</dbReference>
<dbReference type="InterPro" id="IPR004182">
    <property type="entry name" value="GRAM"/>
</dbReference>
<dbReference type="InterPro" id="IPR011993">
    <property type="entry name" value="PH-like_dom_sf"/>
</dbReference>
<dbReference type="InterPro" id="IPR042624">
    <property type="entry name" value="RAMD2A"/>
</dbReference>
<dbReference type="PANTHER" id="PTHR46973">
    <property type="entry name" value="GRAM DOMAIN-CONTAINING PROTEIN 2A"/>
    <property type="match status" value="1"/>
</dbReference>
<dbReference type="PANTHER" id="PTHR46973:SF1">
    <property type="entry name" value="GRAM DOMAIN-CONTAINING PROTEIN 2A"/>
    <property type="match status" value="1"/>
</dbReference>
<dbReference type="Pfam" id="PF02893">
    <property type="entry name" value="GRAM"/>
    <property type="match status" value="1"/>
</dbReference>
<dbReference type="SMART" id="SM00568">
    <property type="entry name" value="GRAM"/>
    <property type="match status" value="1"/>
</dbReference>
<keyword id="KW-1003">Cell membrane</keyword>
<keyword id="KW-0256">Endoplasmic reticulum</keyword>
<keyword id="KW-0446">Lipid-binding</keyword>
<keyword id="KW-0472">Membrane</keyword>
<keyword id="KW-1267">Proteomics identification</keyword>
<keyword id="KW-1185">Reference proteome</keyword>
<keyword id="KW-0812">Transmembrane</keyword>
<keyword id="KW-1133">Transmembrane helix</keyword>